<proteinExistence type="inferred from homology"/>
<keyword id="KW-0066">ATP synthesis</keyword>
<keyword id="KW-0067">ATP-binding</keyword>
<keyword id="KW-0139">CF(1)</keyword>
<keyword id="KW-0150">Chloroplast</keyword>
<keyword id="KW-0375">Hydrogen ion transport</keyword>
<keyword id="KW-0406">Ion transport</keyword>
<keyword id="KW-0472">Membrane</keyword>
<keyword id="KW-0547">Nucleotide-binding</keyword>
<keyword id="KW-0934">Plastid</keyword>
<keyword id="KW-0793">Thylakoid</keyword>
<keyword id="KW-1278">Translocase</keyword>
<keyword id="KW-0813">Transport</keyword>
<geneLocation type="chloroplast"/>
<name>ATPB_CHAHU</name>
<comment type="function">
    <text evidence="1">Produces ATP from ADP in the presence of a proton gradient across the membrane. The catalytic sites are hosted primarily by the beta subunits.</text>
</comment>
<comment type="catalytic activity">
    <reaction evidence="1">
        <text>ATP + H2O + 4 H(+)(in) = ADP + phosphate + 5 H(+)(out)</text>
        <dbReference type="Rhea" id="RHEA:57720"/>
        <dbReference type="ChEBI" id="CHEBI:15377"/>
        <dbReference type="ChEBI" id="CHEBI:15378"/>
        <dbReference type="ChEBI" id="CHEBI:30616"/>
        <dbReference type="ChEBI" id="CHEBI:43474"/>
        <dbReference type="ChEBI" id="CHEBI:456216"/>
        <dbReference type="EC" id="7.1.2.2"/>
    </reaction>
</comment>
<comment type="subunit">
    <text evidence="1">F-type ATPases have 2 components, CF(1) - the catalytic core - and CF(0) - the membrane proton channel. CF(1) has five subunits: alpha(3), beta(3), gamma(1), delta(1), epsilon(1). CF(0) has four main subunits: a(1), b(1), b'(1) and c(9-12).</text>
</comment>
<comment type="subcellular location">
    <subcellularLocation>
        <location evidence="1">Plastid</location>
        <location evidence="1">Chloroplast thylakoid membrane</location>
        <topology evidence="1">Peripheral membrane protein</topology>
    </subcellularLocation>
</comment>
<comment type="similarity">
    <text evidence="1">Belongs to the ATPase alpha/beta chains family.</text>
</comment>
<accession>Q9BA96</accession>
<protein>
    <recommendedName>
        <fullName evidence="1">ATP synthase subunit beta, chloroplastic</fullName>
        <ecNumber evidence="1">7.1.2.2</ecNumber>
    </recommendedName>
    <alternativeName>
        <fullName evidence="1">ATP synthase F1 sector subunit beta</fullName>
    </alternativeName>
    <alternativeName>
        <fullName evidence="1">F-ATPase subunit beta</fullName>
    </alternativeName>
</protein>
<feature type="chain" id="PRO_0000254458" description="ATP synthase subunit beta, chloroplastic">
    <location>
        <begin position="1"/>
        <end position="498"/>
    </location>
</feature>
<feature type="binding site" evidence="1">
    <location>
        <begin position="172"/>
        <end position="179"/>
    </location>
    <ligand>
        <name>ATP</name>
        <dbReference type="ChEBI" id="CHEBI:30616"/>
    </ligand>
</feature>
<sequence>MRTNPTTSSPVVSTLEEKNLGRIAQIIGPVLDVVFPPGKMPNIYNALVVKGRETVGQQINVTCEVQQLLGNNRVRAVAMSATDGLMRGMEVIDTGAPLSVPVGGATLGRIFNVLGEPVDNLGPVDTRTTSPIHRSAPAFIQLDTKLSIFETGIKVVDLLAPYRRGGKIGLFGGAGVGKTVLIMELINNIAKAHGGVSVFGGVGERTREGNDLYMEMKESGVINEKNIAESKVALVYGQMNEPPGARMRVGLTALTMAEYFRDVNEQDVLLFIDNIFRFVQAGSEVSALLGRMPSAVGYQPTLSTEMGSLQERITSTKEGSITSIQAVYVPADDLTDPAPATTFAHLDATTVLSRVLAAKGIYPAVDPLDSTSTMLQPRIVGEEHYETAQRVKQTSQRYKELQDIIAILGLDELSEEDRLTVARARKIERFLSQPFFVAEVFTGSPGKYVGLGETIRGFQLILSGELDGLPEQAFYLVGNIDEATAKAMNLEVESKLKK</sequence>
<gene>
    <name evidence="1" type="primary">atpB</name>
</gene>
<evidence type="ECO:0000255" key="1">
    <source>
        <dbReference type="HAMAP-Rule" id="MF_01347"/>
    </source>
</evidence>
<reference key="1">
    <citation type="journal article" date="2002" name="Syst. Biol.">
        <title>A molecular phylogenetic study of the Palmae (Arecaceae) based on atpB, rbcL, and 18S nrDNA sequences.</title>
        <authorList>
            <person name="Hahn W.J."/>
        </authorList>
    </citation>
    <scope>NUCLEOTIDE SEQUENCE [GENOMIC DNA]</scope>
</reference>
<organism>
    <name type="scientific">Chamaerops humilis</name>
    <name type="common">Mediterranean fan palm</name>
    <dbReference type="NCBI Taxonomy" id="54446"/>
    <lineage>
        <taxon>Eukaryota</taxon>
        <taxon>Viridiplantae</taxon>
        <taxon>Streptophyta</taxon>
        <taxon>Embryophyta</taxon>
        <taxon>Tracheophyta</taxon>
        <taxon>Spermatophyta</taxon>
        <taxon>Magnoliopsida</taxon>
        <taxon>Liliopsida</taxon>
        <taxon>Arecaceae</taxon>
        <taxon>Coryphoideae</taxon>
        <taxon>Livistoneae</taxon>
        <taxon>Rhapidineae</taxon>
        <taxon>Chamaerops</taxon>
    </lineage>
</organism>
<dbReference type="EC" id="7.1.2.2" evidence="1"/>
<dbReference type="EMBL" id="AY012399">
    <property type="protein sequence ID" value="AAK14654.1"/>
    <property type="molecule type" value="Genomic_DNA"/>
</dbReference>
<dbReference type="SMR" id="Q9BA96"/>
<dbReference type="GO" id="GO:0009535">
    <property type="term" value="C:chloroplast thylakoid membrane"/>
    <property type="evidence" value="ECO:0007669"/>
    <property type="project" value="UniProtKB-SubCell"/>
</dbReference>
<dbReference type="GO" id="GO:0005739">
    <property type="term" value="C:mitochondrion"/>
    <property type="evidence" value="ECO:0007669"/>
    <property type="project" value="GOC"/>
</dbReference>
<dbReference type="GO" id="GO:0045259">
    <property type="term" value="C:proton-transporting ATP synthase complex"/>
    <property type="evidence" value="ECO:0007669"/>
    <property type="project" value="UniProtKB-KW"/>
</dbReference>
<dbReference type="GO" id="GO:0005524">
    <property type="term" value="F:ATP binding"/>
    <property type="evidence" value="ECO:0007669"/>
    <property type="project" value="UniProtKB-UniRule"/>
</dbReference>
<dbReference type="GO" id="GO:0016887">
    <property type="term" value="F:ATP hydrolysis activity"/>
    <property type="evidence" value="ECO:0007669"/>
    <property type="project" value="InterPro"/>
</dbReference>
<dbReference type="GO" id="GO:0046933">
    <property type="term" value="F:proton-transporting ATP synthase activity, rotational mechanism"/>
    <property type="evidence" value="ECO:0007669"/>
    <property type="project" value="UniProtKB-UniRule"/>
</dbReference>
<dbReference type="GO" id="GO:0042776">
    <property type="term" value="P:proton motive force-driven mitochondrial ATP synthesis"/>
    <property type="evidence" value="ECO:0007669"/>
    <property type="project" value="TreeGrafter"/>
</dbReference>
<dbReference type="CDD" id="cd18110">
    <property type="entry name" value="ATP-synt_F1_beta_C"/>
    <property type="match status" value="1"/>
</dbReference>
<dbReference type="CDD" id="cd18115">
    <property type="entry name" value="ATP-synt_F1_beta_N"/>
    <property type="match status" value="1"/>
</dbReference>
<dbReference type="CDD" id="cd01133">
    <property type="entry name" value="F1-ATPase_beta_CD"/>
    <property type="match status" value="1"/>
</dbReference>
<dbReference type="FunFam" id="1.10.1140.10:FF:000001">
    <property type="entry name" value="ATP synthase subunit beta"/>
    <property type="match status" value="1"/>
</dbReference>
<dbReference type="FunFam" id="3.40.50.12240:FF:000006">
    <property type="entry name" value="ATP synthase subunit beta"/>
    <property type="match status" value="1"/>
</dbReference>
<dbReference type="FunFam" id="3.40.50.300:FF:000004">
    <property type="entry name" value="ATP synthase subunit beta"/>
    <property type="match status" value="1"/>
</dbReference>
<dbReference type="FunFam" id="2.40.10.170:FF:000002">
    <property type="entry name" value="ATP synthase subunit beta, chloroplastic"/>
    <property type="match status" value="1"/>
</dbReference>
<dbReference type="Gene3D" id="2.40.10.170">
    <property type="match status" value="1"/>
</dbReference>
<dbReference type="Gene3D" id="1.10.1140.10">
    <property type="entry name" value="Bovine Mitochondrial F1-atpase, Atp Synthase Beta Chain, Chain D, domain 3"/>
    <property type="match status" value="1"/>
</dbReference>
<dbReference type="Gene3D" id="3.40.50.300">
    <property type="entry name" value="P-loop containing nucleotide triphosphate hydrolases"/>
    <property type="match status" value="1"/>
</dbReference>
<dbReference type="HAMAP" id="MF_01347">
    <property type="entry name" value="ATP_synth_beta_bact"/>
    <property type="match status" value="1"/>
</dbReference>
<dbReference type="InterPro" id="IPR003593">
    <property type="entry name" value="AAA+_ATPase"/>
</dbReference>
<dbReference type="InterPro" id="IPR055190">
    <property type="entry name" value="ATP-synt_VA_C"/>
</dbReference>
<dbReference type="InterPro" id="IPR005722">
    <property type="entry name" value="ATP_synth_F1_bsu"/>
</dbReference>
<dbReference type="InterPro" id="IPR020003">
    <property type="entry name" value="ATPase_a/bsu_AS"/>
</dbReference>
<dbReference type="InterPro" id="IPR050053">
    <property type="entry name" value="ATPase_alpha/beta_chains"/>
</dbReference>
<dbReference type="InterPro" id="IPR004100">
    <property type="entry name" value="ATPase_F1/V1/A1_a/bsu_N"/>
</dbReference>
<dbReference type="InterPro" id="IPR036121">
    <property type="entry name" value="ATPase_F1/V1/A1_a/bsu_N_sf"/>
</dbReference>
<dbReference type="InterPro" id="IPR000194">
    <property type="entry name" value="ATPase_F1/V1/A1_a/bsu_nucl-bd"/>
</dbReference>
<dbReference type="InterPro" id="IPR024034">
    <property type="entry name" value="ATPase_F1/V1_b/a_C"/>
</dbReference>
<dbReference type="InterPro" id="IPR027417">
    <property type="entry name" value="P-loop_NTPase"/>
</dbReference>
<dbReference type="NCBIfam" id="TIGR01039">
    <property type="entry name" value="atpD"/>
    <property type="match status" value="1"/>
</dbReference>
<dbReference type="PANTHER" id="PTHR15184">
    <property type="entry name" value="ATP SYNTHASE"/>
    <property type="match status" value="1"/>
</dbReference>
<dbReference type="PANTHER" id="PTHR15184:SF71">
    <property type="entry name" value="ATP SYNTHASE SUBUNIT BETA, MITOCHONDRIAL"/>
    <property type="match status" value="1"/>
</dbReference>
<dbReference type="Pfam" id="PF00006">
    <property type="entry name" value="ATP-synt_ab"/>
    <property type="match status" value="1"/>
</dbReference>
<dbReference type="Pfam" id="PF02874">
    <property type="entry name" value="ATP-synt_ab_N"/>
    <property type="match status" value="1"/>
</dbReference>
<dbReference type="Pfam" id="PF22919">
    <property type="entry name" value="ATP-synt_VA_C"/>
    <property type="match status" value="1"/>
</dbReference>
<dbReference type="SMART" id="SM00382">
    <property type="entry name" value="AAA"/>
    <property type="match status" value="1"/>
</dbReference>
<dbReference type="SUPFAM" id="SSF47917">
    <property type="entry name" value="C-terminal domain of alpha and beta subunits of F1 ATP synthase"/>
    <property type="match status" value="1"/>
</dbReference>
<dbReference type="SUPFAM" id="SSF50615">
    <property type="entry name" value="N-terminal domain of alpha and beta subunits of F1 ATP synthase"/>
    <property type="match status" value="1"/>
</dbReference>
<dbReference type="SUPFAM" id="SSF52540">
    <property type="entry name" value="P-loop containing nucleoside triphosphate hydrolases"/>
    <property type="match status" value="1"/>
</dbReference>
<dbReference type="PROSITE" id="PS00152">
    <property type="entry name" value="ATPASE_ALPHA_BETA"/>
    <property type="match status" value="1"/>
</dbReference>